<accession>A3CQ06</accession>
<gene>
    <name evidence="1" type="primary">glyQ</name>
    <name type="ordered locus">SSA_1880</name>
</gene>
<evidence type="ECO:0000255" key="1">
    <source>
        <dbReference type="HAMAP-Rule" id="MF_00254"/>
    </source>
</evidence>
<protein>
    <recommendedName>
        <fullName evidence="1">Glycine--tRNA ligase alpha subunit</fullName>
        <ecNumber evidence="1">6.1.1.14</ecNumber>
    </recommendedName>
    <alternativeName>
        <fullName evidence="1">Glycyl-tRNA synthetase alpha subunit</fullName>
        <shortName evidence="1">GlyRS</shortName>
    </alternativeName>
</protein>
<comment type="catalytic activity">
    <reaction evidence="1">
        <text>tRNA(Gly) + glycine + ATP = glycyl-tRNA(Gly) + AMP + diphosphate</text>
        <dbReference type="Rhea" id="RHEA:16013"/>
        <dbReference type="Rhea" id="RHEA-COMP:9664"/>
        <dbReference type="Rhea" id="RHEA-COMP:9683"/>
        <dbReference type="ChEBI" id="CHEBI:30616"/>
        <dbReference type="ChEBI" id="CHEBI:33019"/>
        <dbReference type="ChEBI" id="CHEBI:57305"/>
        <dbReference type="ChEBI" id="CHEBI:78442"/>
        <dbReference type="ChEBI" id="CHEBI:78522"/>
        <dbReference type="ChEBI" id="CHEBI:456215"/>
        <dbReference type="EC" id="6.1.1.14"/>
    </reaction>
</comment>
<comment type="subunit">
    <text evidence="1">Tetramer of two alpha and two beta subunits.</text>
</comment>
<comment type="subcellular location">
    <subcellularLocation>
        <location evidence="1">Cytoplasm</location>
    </subcellularLocation>
</comment>
<comment type="similarity">
    <text evidence="1">Belongs to the class-II aminoacyl-tRNA synthetase family.</text>
</comment>
<organism>
    <name type="scientific">Streptococcus sanguinis (strain SK36)</name>
    <dbReference type="NCBI Taxonomy" id="388919"/>
    <lineage>
        <taxon>Bacteria</taxon>
        <taxon>Bacillati</taxon>
        <taxon>Bacillota</taxon>
        <taxon>Bacilli</taxon>
        <taxon>Lactobacillales</taxon>
        <taxon>Streptococcaceae</taxon>
        <taxon>Streptococcus</taxon>
    </lineage>
</organism>
<name>SYGA_STRSV</name>
<feature type="chain" id="PRO_1000047507" description="Glycine--tRNA ligase alpha subunit">
    <location>
        <begin position="1"/>
        <end position="305"/>
    </location>
</feature>
<dbReference type="EC" id="6.1.1.14" evidence="1"/>
<dbReference type="EMBL" id="CP000387">
    <property type="protein sequence ID" value="ABN45261.1"/>
    <property type="molecule type" value="Genomic_DNA"/>
</dbReference>
<dbReference type="RefSeq" id="WP_008808562.1">
    <property type="nucleotide sequence ID" value="NC_009009.1"/>
</dbReference>
<dbReference type="RefSeq" id="YP_001035811.1">
    <property type="nucleotide sequence ID" value="NC_009009.1"/>
</dbReference>
<dbReference type="SMR" id="A3CQ06"/>
<dbReference type="STRING" id="388919.SSA_1880"/>
<dbReference type="KEGG" id="ssa:SSA_1880"/>
<dbReference type="PATRIC" id="fig|388919.9.peg.1785"/>
<dbReference type="eggNOG" id="COG0752">
    <property type="taxonomic scope" value="Bacteria"/>
</dbReference>
<dbReference type="HOGENOM" id="CLU_057066_1_0_9"/>
<dbReference type="OrthoDB" id="9802183at2"/>
<dbReference type="Proteomes" id="UP000002148">
    <property type="component" value="Chromosome"/>
</dbReference>
<dbReference type="GO" id="GO:0005829">
    <property type="term" value="C:cytosol"/>
    <property type="evidence" value="ECO:0007669"/>
    <property type="project" value="TreeGrafter"/>
</dbReference>
<dbReference type="GO" id="GO:0005524">
    <property type="term" value="F:ATP binding"/>
    <property type="evidence" value="ECO:0007669"/>
    <property type="project" value="UniProtKB-UniRule"/>
</dbReference>
<dbReference type="GO" id="GO:0140096">
    <property type="term" value="F:catalytic activity, acting on a protein"/>
    <property type="evidence" value="ECO:0007669"/>
    <property type="project" value="UniProtKB-ARBA"/>
</dbReference>
<dbReference type="GO" id="GO:0004820">
    <property type="term" value="F:glycine-tRNA ligase activity"/>
    <property type="evidence" value="ECO:0007669"/>
    <property type="project" value="UniProtKB-UniRule"/>
</dbReference>
<dbReference type="GO" id="GO:0016740">
    <property type="term" value="F:transferase activity"/>
    <property type="evidence" value="ECO:0007669"/>
    <property type="project" value="UniProtKB-ARBA"/>
</dbReference>
<dbReference type="GO" id="GO:0006426">
    <property type="term" value="P:glycyl-tRNA aminoacylation"/>
    <property type="evidence" value="ECO:0007669"/>
    <property type="project" value="UniProtKB-UniRule"/>
</dbReference>
<dbReference type="CDD" id="cd00733">
    <property type="entry name" value="GlyRS_alpha_core"/>
    <property type="match status" value="1"/>
</dbReference>
<dbReference type="FunFam" id="3.30.930.10:FF:000006">
    <property type="entry name" value="Glycine--tRNA ligase alpha subunit"/>
    <property type="match status" value="1"/>
</dbReference>
<dbReference type="Gene3D" id="3.30.930.10">
    <property type="entry name" value="Bira Bifunctional Protein, Domain 2"/>
    <property type="match status" value="1"/>
</dbReference>
<dbReference type="Gene3D" id="1.20.58.180">
    <property type="entry name" value="Class II aaRS and biotin synthetases, domain 2"/>
    <property type="match status" value="1"/>
</dbReference>
<dbReference type="HAMAP" id="MF_00254">
    <property type="entry name" value="Gly_tRNA_synth_alpha"/>
    <property type="match status" value="1"/>
</dbReference>
<dbReference type="InterPro" id="IPR045864">
    <property type="entry name" value="aa-tRNA-synth_II/BPL/LPL"/>
</dbReference>
<dbReference type="InterPro" id="IPR006194">
    <property type="entry name" value="Gly-tRNA-synth_heterodimer"/>
</dbReference>
<dbReference type="InterPro" id="IPR002310">
    <property type="entry name" value="Gly-tRNA_ligase_asu"/>
</dbReference>
<dbReference type="NCBIfam" id="TIGR00388">
    <property type="entry name" value="glyQ"/>
    <property type="match status" value="1"/>
</dbReference>
<dbReference type="NCBIfam" id="NF006827">
    <property type="entry name" value="PRK09348.1"/>
    <property type="match status" value="1"/>
</dbReference>
<dbReference type="PANTHER" id="PTHR30075:SF2">
    <property type="entry name" value="GLYCINE--TRNA LIGASE, CHLOROPLASTIC_MITOCHONDRIAL 2"/>
    <property type="match status" value="1"/>
</dbReference>
<dbReference type="PANTHER" id="PTHR30075">
    <property type="entry name" value="GLYCYL-TRNA SYNTHETASE"/>
    <property type="match status" value="1"/>
</dbReference>
<dbReference type="Pfam" id="PF02091">
    <property type="entry name" value="tRNA-synt_2e"/>
    <property type="match status" value="1"/>
</dbReference>
<dbReference type="PRINTS" id="PR01044">
    <property type="entry name" value="TRNASYNTHGA"/>
</dbReference>
<dbReference type="SUPFAM" id="SSF55681">
    <property type="entry name" value="Class II aaRS and biotin synthetases"/>
    <property type="match status" value="1"/>
</dbReference>
<dbReference type="PROSITE" id="PS50861">
    <property type="entry name" value="AA_TRNA_LIGASE_II_GLYAB"/>
    <property type="match status" value="1"/>
</dbReference>
<keyword id="KW-0030">Aminoacyl-tRNA synthetase</keyword>
<keyword id="KW-0067">ATP-binding</keyword>
<keyword id="KW-0963">Cytoplasm</keyword>
<keyword id="KW-0436">Ligase</keyword>
<keyword id="KW-0547">Nucleotide-binding</keyword>
<keyword id="KW-0648">Protein biosynthesis</keyword>
<keyword id="KW-1185">Reference proteome</keyword>
<reference key="1">
    <citation type="journal article" date="2007" name="J. Bacteriol.">
        <title>Genome of the opportunistic pathogen Streptococcus sanguinis.</title>
        <authorList>
            <person name="Xu P."/>
            <person name="Alves J.M."/>
            <person name="Kitten T."/>
            <person name="Brown A."/>
            <person name="Chen Z."/>
            <person name="Ozaki L.S."/>
            <person name="Manque P."/>
            <person name="Ge X."/>
            <person name="Serrano M.G."/>
            <person name="Puiu D."/>
            <person name="Hendricks S."/>
            <person name="Wang Y."/>
            <person name="Chaplin M.D."/>
            <person name="Akan D."/>
            <person name="Paik S."/>
            <person name="Peterson D.L."/>
            <person name="Macrina F.L."/>
            <person name="Buck G.A."/>
        </authorList>
    </citation>
    <scope>NUCLEOTIDE SEQUENCE [LARGE SCALE GENOMIC DNA]</scope>
    <source>
        <strain>SK36</strain>
    </source>
</reference>
<proteinExistence type="inferred from homology"/>
<sequence length="305" mass="35029">MSKKLTFQEIILTLQQFWNDQGCMLMQAYDNEKGAGTMSPYTFLRAIGPEPWNAAYVEPSRRPADGRYGENPNRLYQHHQFQVVMKPSPSNIQELYLQSLELLGINPLEHDIRFVEDNWENPSTGSAGLGWEVWLDGMEITQFTYFQQVGGLPTHPVTAEVTYGLERLASYIQEVDSVYDIEWADGVKYGEIFTHPEYEHSKYSFEVSDQDLLLGNFERFEAEAKRCLDEHLVHPAYDYVLKCSHTFNLLDARGAVSVTERAGYIARIRNLARVVAKTFVAERKRLGYPLLDAETREKLLAEEGE</sequence>